<proteinExistence type="inferred from homology"/>
<keyword id="KW-0963">Cytoplasm</keyword>
<keyword id="KW-0238">DNA-binding</keyword>
<keyword id="KW-0677">Repeat</keyword>
<keyword id="KW-0804">Transcription</keyword>
<keyword id="KW-0805">Transcription regulation</keyword>
<protein>
    <recommendedName>
        <fullName>Transcriptional regulator MraZ</fullName>
    </recommendedName>
</protein>
<evidence type="ECO:0000255" key="1">
    <source>
        <dbReference type="HAMAP-Rule" id="MF_01008"/>
    </source>
</evidence>
<evidence type="ECO:0000255" key="2">
    <source>
        <dbReference type="PROSITE-ProRule" id="PRU01076"/>
    </source>
</evidence>
<gene>
    <name evidence="1" type="primary">mraZ</name>
    <name type="ordered locus">Franean1_5107</name>
</gene>
<comment type="subunit">
    <text evidence="1">Forms oligomers.</text>
</comment>
<comment type="subcellular location">
    <subcellularLocation>
        <location evidence="1">Cytoplasm</location>
        <location evidence="1">Nucleoid</location>
    </subcellularLocation>
</comment>
<comment type="similarity">
    <text evidence="1">Belongs to the MraZ family.</text>
</comment>
<accession>A8KZB0</accession>
<dbReference type="EMBL" id="CP000820">
    <property type="protein sequence ID" value="ABW14466.1"/>
    <property type="molecule type" value="Genomic_DNA"/>
</dbReference>
<dbReference type="RefSeq" id="WP_020462581.1">
    <property type="nucleotide sequence ID" value="NC_009921.1"/>
</dbReference>
<dbReference type="SMR" id="A8KZB0"/>
<dbReference type="STRING" id="298653.Franean1_5107"/>
<dbReference type="KEGG" id="fre:Franean1_5107"/>
<dbReference type="eggNOG" id="COG2001">
    <property type="taxonomic scope" value="Bacteria"/>
</dbReference>
<dbReference type="HOGENOM" id="CLU_107907_0_5_11"/>
<dbReference type="GO" id="GO:0005737">
    <property type="term" value="C:cytoplasm"/>
    <property type="evidence" value="ECO:0007669"/>
    <property type="project" value="UniProtKB-UniRule"/>
</dbReference>
<dbReference type="GO" id="GO:0009295">
    <property type="term" value="C:nucleoid"/>
    <property type="evidence" value="ECO:0007669"/>
    <property type="project" value="UniProtKB-SubCell"/>
</dbReference>
<dbReference type="GO" id="GO:0003700">
    <property type="term" value="F:DNA-binding transcription factor activity"/>
    <property type="evidence" value="ECO:0007669"/>
    <property type="project" value="UniProtKB-UniRule"/>
</dbReference>
<dbReference type="GO" id="GO:0000976">
    <property type="term" value="F:transcription cis-regulatory region binding"/>
    <property type="evidence" value="ECO:0007669"/>
    <property type="project" value="TreeGrafter"/>
</dbReference>
<dbReference type="GO" id="GO:2000143">
    <property type="term" value="P:negative regulation of DNA-templated transcription initiation"/>
    <property type="evidence" value="ECO:0007669"/>
    <property type="project" value="TreeGrafter"/>
</dbReference>
<dbReference type="CDD" id="cd16321">
    <property type="entry name" value="MraZ_C"/>
    <property type="match status" value="1"/>
</dbReference>
<dbReference type="CDD" id="cd16320">
    <property type="entry name" value="MraZ_N"/>
    <property type="match status" value="1"/>
</dbReference>
<dbReference type="Gene3D" id="3.40.1550.20">
    <property type="entry name" value="Transcriptional regulator MraZ domain"/>
    <property type="match status" value="1"/>
</dbReference>
<dbReference type="HAMAP" id="MF_01008">
    <property type="entry name" value="MraZ"/>
    <property type="match status" value="1"/>
</dbReference>
<dbReference type="InterPro" id="IPR003444">
    <property type="entry name" value="MraZ"/>
</dbReference>
<dbReference type="InterPro" id="IPR035644">
    <property type="entry name" value="MraZ_C"/>
</dbReference>
<dbReference type="InterPro" id="IPR020603">
    <property type="entry name" value="MraZ_dom"/>
</dbReference>
<dbReference type="InterPro" id="IPR035642">
    <property type="entry name" value="MraZ_N"/>
</dbReference>
<dbReference type="InterPro" id="IPR038619">
    <property type="entry name" value="MraZ_sf"/>
</dbReference>
<dbReference type="InterPro" id="IPR007159">
    <property type="entry name" value="SpoVT-AbrB_dom"/>
</dbReference>
<dbReference type="InterPro" id="IPR037914">
    <property type="entry name" value="SpoVT-AbrB_sf"/>
</dbReference>
<dbReference type="NCBIfam" id="TIGR00242">
    <property type="entry name" value="division/cell wall cluster transcriptional repressor MraZ"/>
    <property type="match status" value="1"/>
</dbReference>
<dbReference type="PANTHER" id="PTHR34701">
    <property type="entry name" value="TRANSCRIPTIONAL REGULATOR MRAZ"/>
    <property type="match status" value="1"/>
</dbReference>
<dbReference type="PANTHER" id="PTHR34701:SF1">
    <property type="entry name" value="TRANSCRIPTIONAL REGULATOR MRAZ"/>
    <property type="match status" value="1"/>
</dbReference>
<dbReference type="Pfam" id="PF02381">
    <property type="entry name" value="MraZ"/>
    <property type="match status" value="2"/>
</dbReference>
<dbReference type="SUPFAM" id="SSF89447">
    <property type="entry name" value="AbrB/MazE/MraZ-like"/>
    <property type="match status" value="1"/>
</dbReference>
<dbReference type="PROSITE" id="PS51740">
    <property type="entry name" value="SPOVT_ABRB"/>
    <property type="match status" value="2"/>
</dbReference>
<sequence>MFLGSHTPRLDDKGRLTLPAKFREELEGGLVITKGQERCLYVFPLAEFTRISESLRTAPVTAKALRDYSRVFFSSASDDVPDRQGRITIPPPLRAYAGLVRECVVNGANTRVEIWDSQRWDTYLADQEETFAEMSEEVLPGVI</sequence>
<organism>
    <name type="scientific">Parafrankia sp. (strain EAN1pec)</name>
    <dbReference type="NCBI Taxonomy" id="298653"/>
    <lineage>
        <taxon>Bacteria</taxon>
        <taxon>Bacillati</taxon>
        <taxon>Actinomycetota</taxon>
        <taxon>Actinomycetes</taxon>
        <taxon>Frankiales</taxon>
        <taxon>Frankiaceae</taxon>
        <taxon>Parafrankia</taxon>
    </lineage>
</organism>
<name>MRAZ_PARS2</name>
<feature type="chain" id="PRO_1000134800" description="Transcriptional regulator MraZ">
    <location>
        <begin position="1"/>
        <end position="143"/>
    </location>
</feature>
<feature type="domain" description="SpoVT-AbrB 1" evidence="2">
    <location>
        <begin position="5"/>
        <end position="47"/>
    </location>
</feature>
<feature type="domain" description="SpoVT-AbrB 2" evidence="2">
    <location>
        <begin position="76"/>
        <end position="119"/>
    </location>
</feature>
<reference key="1">
    <citation type="journal article" date="2007" name="Genome Res.">
        <title>Genome characteristics of facultatively symbiotic Frankia sp. strains reflect host range and host plant biogeography.</title>
        <authorList>
            <person name="Normand P."/>
            <person name="Lapierre P."/>
            <person name="Tisa L.S."/>
            <person name="Gogarten J.P."/>
            <person name="Alloisio N."/>
            <person name="Bagnarol E."/>
            <person name="Bassi C.A."/>
            <person name="Berry A.M."/>
            <person name="Bickhart D.M."/>
            <person name="Choisne N."/>
            <person name="Couloux A."/>
            <person name="Cournoyer B."/>
            <person name="Cruveiller S."/>
            <person name="Daubin V."/>
            <person name="Demange N."/>
            <person name="Francino M.P."/>
            <person name="Goltsman E."/>
            <person name="Huang Y."/>
            <person name="Kopp O.R."/>
            <person name="Labarre L."/>
            <person name="Lapidus A."/>
            <person name="Lavire C."/>
            <person name="Marechal J."/>
            <person name="Martinez M."/>
            <person name="Mastronunzio J.E."/>
            <person name="Mullin B.C."/>
            <person name="Niemann J."/>
            <person name="Pujic P."/>
            <person name="Rawnsley T."/>
            <person name="Rouy Z."/>
            <person name="Schenowitz C."/>
            <person name="Sellstedt A."/>
            <person name="Tavares F."/>
            <person name="Tomkins J.P."/>
            <person name="Vallenet D."/>
            <person name="Valverde C."/>
            <person name="Wall L.G."/>
            <person name="Wang Y."/>
            <person name="Medigue C."/>
            <person name="Benson D.R."/>
        </authorList>
    </citation>
    <scope>NUCLEOTIDE SEQUENCE [LARGE SCALE GENOMIC DNA]</scope>
    <source>
        <strain>EAN1pec</strain>
    </source>
</reference>